<name>SAHH_CUPPJ</name>
<comment type="function">
    <text evidence="1">May play a key role in the regulation of the intracellular concentration of adenosylhomocysteine.</text>
</comment>
<comment type="catalytic activity">
    <reaction evidence="1">
        <text>S-adenosyl-L-homocysteine + H2O = L-homocysteine + adenosine</text>
        <dbReference type="Rhea" id="RHEA:21708"/>
        <dbReference type="ChEBI" id="CHEBI:15377"/>
        <dbReference type="ChEBI" id="CHEBI:16335"/>
        <dbReference type="ChEBI" id="CHEBI:57856"/>
        <dbReference type="ChEBI" id="CHEBI:58199"/>
        <dbReference type="EC" id="3.13.2.1"/>
    </reaction>
</comment>
<comment type="cofactor">
    <cofactor evidence="1">
        <name>NAD(+)</name>
        <dbReference type="ChEBI" id="CHEBI:57540"/>
    </cofactor>
    <text evidence="1">Binds 1 NAD(+) per subunit.</text>
</comment>
<comment type="pathway">
    <text evidence="1">Amino-acid biosynthesis; L-homocysteine biosynthesis; L-homocysteine from S-adenosyl-L-homocysteine: step 1/1.</text>
</comment>
<comment type="subcellular location">
    <subcellularLocation>
        <location evidence="1">Cytoplasm</location>
    </subcellularLocation>
</comment>
<comment type="similarity">
    <text evidence="1">Belongs to the adenosylhomocysteinase family.</text>
</comment>
<proteinExistence type="inferred from homology"/>
<reference key="1">
    <citation type="journal article" date="2010" name="PLoS ONE">
        <title>The complete multipartite genome sequence of Cupriavidus necator JMP134, a versatile pollutant degrader.</title>
        <authorList>
            <person name="Lykidis A."/>
            <person name="Perez-Pantoja D."/>
            <person name="Ledger T."/>
            <person name="Mavromatis K."/>
            <person name="Anderson I.J."/>
            <person name="Ivanova N.N."/>
            <person name="Hooper S.D."/>
            <person name="Lapidus A."/>
            <person name="Lucas S."/>
            <person name="Gonzalez B."/>
            <person name="Kyrpides N.C."/>
        </authorList>
    </citation>
    <scope>NUCLEOTIDE SEQUENCE [LARGE SCALE GENOMIC DNA]</scope>
    <source>
        <strain>JMP134 / LMG 1197</strain>
    </source>
</reference>
<accession>Q476T8</accession>
<dbReference type="EC" id="3.13.2.1" evidence="1"/>
<dbReference type="EMBL" id="CP000090">
    <property type="protein sequence ID" value="AAZ59595.1"/>
    <property type="molecule type" value="Genomic_DNA"/>
</dbReference>
<dbReference type="SMR" id="Q476T8"/>
<dbReference type="STRING" id="264198.Reut_A0213"/>
<dbReference type="KEGG" id="reu:Reut_A0213"/>
<dbReference type="eggNOG" id="COG0499">
    <property type="taxonomic scope" value="Bacteria"/>
</dbReference>
<dbReference type="HOGENOM" id="CLU_025194_2_1_4"/>
<dbReference type="OrthoDB" id="9802717at2"/>
<dbReference type="UniPathway" id="UPA00314">
    <property type="reaction ID" value="UER00076"/>
</dbReference>
<dbReference type="GO" id="GO:0005829">
    <property type="term" value="C:cytosol"/>
    <property type="evidence" value="ECO:0007669"/>
    <property type="project" value="TreeGrafter"/>
</dbReference>
<dbReference type="GO" id="GO:0004013">
    <property type="term" value="F:adenosylhomocysteinase activity"/>
    <property type="evidence" value="ECO:0007669"/>
    <property type="project" value="UniProtKB-UniRule"/>
</dbReference>
<dbReference type="GO" id="GO:0071269">
    <property type="term" value="P:L-homocysteine biosynthetic process"/>
    <property type="evidence" value="ECO:0007669"/>
    <property type="project" value="UniProtKB-UniRule"/>
</dbReference>
<dbReference type="GO" id="GO:0006730">
    <property type="term" value="P:one-carbon metabolic process"/>
    <property type="evidence" value="ECO:0007669"/>
    <property type="project" value="UniProtKB-KW"/>
</dbReference>
<dbReference type="GO" id="GO:0033353">
    <property type="term" value="P:S-adenosylmethionine cycle"/>
    <property type="evidence" value="ECO:0007669"/>
    <property type="project" value="TreeGrafter"/>
</dbReference>
<dbReference type="CDD" id="cd00401">
    <property type="entry name" value="SAHH"/>
    <property type="match status" value="1"/>
</dbReference>
<dbReference type="FunFam" id="3.40.50.720:FF:000004">
    <property type="entry name" value="Adenosylhomocysteinase"/>
    <property type="match status" value="1"/>
</dbReference>
<dbReference type="Gene3D" id="3.40.50.1480">
    <property type="entry name" value="Adenosylhomocysteinase-like"/>
    <property type="match status" value="1"/>
</dbReference>
<dbReference type="Gene3D" id="3.40.50.720">
    <property type="entry name" value="NAD(P)-binding Rossmann-like Domain"/>
    <property type="match status" value="1"/>
</dbReference>
<dbReference type="HAMAP" id="MF_00563">
    <property type="entry name" value="AdoHcyase"/>
    <property type="match status" value="1"/>
</dbReference>
<dbReference type="InterPro" id="IPR042172">
    <property type="entry name" value="Adenosylhomocyst_ase-like_sf"/>
</dbReference>
<dbReference type="InterPro" id="IPR000043">
    <property type="entry name" value="Adenosylhomocysteinase-like"/>
</dbReference>
<dbReference type="InterPro" id="IPR015878">
    <property type="entry name" value="Ado_hCys_hydrolase_NAD-bd"/>
</dbReference>
<dbReference type="InterPro" id="IPR036291">
    <property type="entry name" value="NAD(P)-bd_dom_sf"/>
</dbReference>
<dbReference type="InterPro" id="IPR020082">
    <property type="entry name" value="S-Ado-L-homoCys_hydrolase_CS"/>
</dbReference>
<dbReference type="NCBIfam" id="TIGR00936">
    <property type="entry name" value="ahcY"/>
    <property type="match status" value="1"/>
</dbReference>
<dbReference type="NCBIfam" id="NF004005">
    <property type="entry name" value="PRK05476.2-3"/>
    <property type="match status" value="1"/>
</dbReference>
<dbReference type="PANTHER" id="PTHR23420">
    <property type="entry name" value="ADENOSYLHOMOCYSTEINASE"/>
    <property type="match status" value="1"/>
</dbReference>
<dbReference type="PANTHER" id="PTHR23420:SF0">
    <property type="entry name" value="ADENOSYLHOMOCYSTEINASE"/>
    <property type="match status" value="1"/>
</dbReference>
<dbReference type="Pfam" id="PF05221">
    <property type="entry name" value="AdoHcyase"/>
    <property type="match status" value="1"/>
</dbReference>
<dbReference type="Pfam" id="PF00670">
    <property type="entry name" value="AdoHcyase_NAD"/>
    <property type="match status" value="1"/>
</dbReference>
<dbReference type="PIRSF" id="PIRSF001109">
    <property type="entry name" value="Ad_hcy_hydrolase"/>
    <property type="match status" value="1"/>
</dbReference>
<dbReference type="SMART" id="SM00996">
    <property type="entry name" value="AdoHcyase"/>
    <property type="match status" value="1"/>
</dbReference>
<dbReference type="SMART" id="SM00997">
    <property type="entry name" value="AdoHcyase_NAD"/>
    <property type="match status" value="1"/>
</dbReference>
<dbReference type="SUPFAM" id="SSF52283">
    <property type="entry name" value="Formate/glycerate dehydrogenase catalytic domain-like"/>
    <property type="match status" value="1"/>
</dbReference>
<dbReference type="SUPFAM" id="SSF51735">
    <property type="entry name" value="NAD(P)-binding Rossmann-fold domains"/>
    <property type="match status" value="1"/>
</dbReference>
<dbReference type="PROSITE" id="PS00738">
    <property type="entry name" value="ADOHCYASE_1"/>
    <property type="match status" value="1"/>
</dbReference>
<dbReference type="PROSITE" id="PS00739">
    <property type="entry name" value="ADOHCYASE_2"/>
    <property type="match status" value="1"/>
</dbReference>
<evidence type="ECO:0000255" key="1">
    <source>
        <dbReference type="HAMAP-Rule" id="MF_00563"/>
    </source>
</evidence>
<feature type="chain" id="PRO_1000129298" description="Adenosylhomocysteinase">
    <location>
        <begin position="1"/>
        <end position="472"/>
    </location>
</feature>
<feature type="binding site" evidence="1">
    <location>
        <position position="61"/>
    </location>
    <ligand>
        <name>substrate</name>
    </ligand>
</feature>
<feature type="binding site" evidence="1">
    <location>
        <position position="136"/>
    </location>
    <ligand>
        <name>substrate</name>
    </ligand>
</feature>
<feature type="binding site" evidence="1">
    <location>
        <position position="196"/>
    </location>
    <ligand>
        <name>substrate</name>
    </ligand>
</feature>
<feature type="binding site" evidence="1">
    <location>
        <begin position="197"/>
        <end position="199"/>
    </location>
    <ligand>
        <name>NAD(+)</name>
        <dbReference type="ChEBI" id="CHEBI:57540"/>
    </ligand>
</feature>
<feature type="binding site" evidence="1">
    <location>
        <position position="226"/>
    </location>
    <ligand>
        <name>substrate</name>
    </ligand>
</feature>
<feature type="binding site" evidence="1">
    <location>
        <position position="230"/>
    </location>
    <ligand>
        <name>substrate</name>
    </ligand>
</feature>
<feature type="binding site" evidence="1">
    <location>
        <position position="231"/>
    </location>
    <ligand>
        <name>NAD(+)</name>
        <dbReference type="ChEBI" id="CHEBI:57540"/>
    </ligand>
</feature>
<feature type="binding site" evidence="1">
    <location>
        <begin position="260"/>
        <end position="265"/>
    </location>
    <ligand>
        <name>NAD(+)</name>
        <dbReference type="ChEBI" id="CHEBI:57540"/>
    </ligand>
</feature>
<feature type="binding site" evidence="1">
    <location>
        <position position="283"/>
    </location>
    <ligand>
        <name>NAD(+)</name>
        <dbReference type="ChEBI" id="CHEBI:57540"/>
    </ligand>
</feature>
<feature type="binding site" evidence="1">
    <location>
        <position position="318"/>
    </location>
    <ligand>
        <name>NAD(+)</name>
        <dbReference type="ChEBI" id="CHEBI:57540"/>
    </ligand>
</feature>
<feature type="binding site" evidence="1">
    <location>
        <begin position="339"/>
        <end position="341"/>
    </location>
    <ligand>
        <name>NAD(+)</name>
        <dbReference type="ChEBI" id="CHEBI:57540"/>
    </ligand>
</feature>
<feature type="binding site" evidence="1">
    <location>
        <position position="384"/>
    </location>
    <ligand>
        <name>NAD(+)</name>
        <dbReference type="ChEBI" id="CHEBI:57540"/>
    </ligand>
</feature>
<keyword id="KW-0963">Cytoplasm</keyword>
<keyword id="KW-0378">Hydrolase</keyword>
<keyword id="KW-0520">NAD</keyword>
<keyword id="KW-0554">One-carbon metabolism</keyword>
<sequence>MNAVTDLKQDYLVADISLAGWGRKEIAIAETEMPGLMAIRDEFAAAQPLKGARIAGSLHMTIQTAVLIETLKALGADVRWASCNIFSTQDHAAAAIAAGGTPVFAFKGESLKEYWDFTHRIFDWVDGGTPNMILDDGGDATLLLHLGAKAEKDASLIANPGSEEETFLFAAIKEKLAKDPSWYSRNLAAIRGVTEETTTGVHRLYQMAQKGDLKFPAINVNDSVTKSKFDNLYGCRESLVDGIKRATDVMIAGKIAIVAGYGDVGKGSAQALRALSAQVWVTEIDPICALQAAMEGYRVVTMDYAAEHGDIFVTCTGNYHVITHDHMARMKDQAIVCNIGHFDNEIDIASIEKYEWDEIKPQVDHVKFPDGKKIIILAKGRLVNLGCATGHPSYVMSSSFANQTIAQIELWQERDSGKYPVGVYTLPKHLDEKVARLQLRKLNAQLTELTEQQAAYIGVKKEGPYKADHYRY</sequence>
<organism>
    <name type="scientific">Cupriavidus pinatubonensis (strain JMP 134 / LMG 1197)</name>
    <name type="common">Cupriavidus necator (strain JMP 134)</name>
    <dbReference type="NCBI Taxonomy" id="264198"/>
    <lineage>
        <taxon>Bacteria</taxon>
        <taxon>Pseudomonadati</taxon>
        <taxon>Pseudomonadota</taxon>
        <taxon>Betaproteobacteria</taxon>
        <taxon>Burkholderiales</taxon>
        <taxon>Burkholderiaceae</taxon>
        <taxon>Cupriavidus</taxon>
    </lineage>
</organism>
<protein>
    <recommendedName>
        <fullName evidence="1">Adenosylhomocysteinase</fullName>
        <ecNumber evidence="1">3.13.2.1</ecNumber>
    </recommendedName>
    <alternativeName>
        <fullName evidence="1">S-adenosyl-L-homocysteine hydrolase</fullName>
        <shortName evidence="1">AdoHcyase</shortName>
    </alternativeName>
</protein>
<gene>
    <name evidence="1" type="primary">ahcY</name>
    <name type="ordered locus">Reut_A0213</name>
</gene>